<name>ATP6_PSEPF</name>
<evidence type="ECO:0000255" key="1">
    <source>
        <dbReference type="HAMAP-Rule" id="MF_01393"/>
    </source>
</evidence>
<accession>Q3K435</accession>
<proteinExistence type="inferred from homology"/>
<keyword id="KW-0066">ATP synthesis</keyword>
<keyword id="KW-0997">Cell inner membrane</keyword>
<keyword id="KW-1003">Cell membrane</keyword>
<keyword id="KW-0138">CF(0)</keyword>
<keyword id="KW-0375">Hydrogen ion transport</keyword>
<keyword id="KW-0406">Ion transport</keyword>
<keyword id="KW-0472">Membrane</keyword>
<keyword id="KW-0812">Transmembrane</keyword>
<keyword id="KW-1133">Transmembrane helix</keyword>
<keyword id="KW-0813">Transport</keyword>
<feature type="chain" id="PRO_0000362394" description="ATP synthase subunit a">
    <location>
        <begin position="1"/>
        <end position="289"/>
    </location>
</feature>
<feature type="transmembrane region" description="Helical" evidence="1">
    <location>
        <begin position="43"/>
        <end position="63"/>
    </location>
</feature>
<feature type="transmembrane region" description="Helical" evidence="1">
    <location>
        <begin position="103"/>
        <end position="123"/>
    </location>
</feature>
<feature type="transmembrane region" description="Helical" evidence="1">
    <location>
        <begin position="160"/>
        <end position="180"/>
    </location>
</feature>
<feature type="transmembrane region" description="Helical" evidence="1">
    <location>
        <begin position="193"/>
        <end position="213"/>
    </location>
</feature>
<feature type="transmembrane region" description="Helical" evidence="1">
    <location>
        <begin position="232"/>
        <end position="252"/>
    </location>
</feature>
<feature type="transmembrane region" description="Helical" evidence="1">
    <location>
        <begin position="259"/>
        <end position="279"/>
    </location>
</feature>
<reference key="1">
    <citation type="journal article" date="2009" name="Genome Biol.">
        <title>Genomic and genetic analyses of diversity and plant interactions of Pseudomonas fluorescens.</title>
        <authorList>
            <person name="Silby M.W."/>
            <person name="Cerdeno-Tarraga A.M."/>
            <person name="Vernikos G.S."/>
            <person name="Giddens S.R."/>
            <person name="Jackson R.W."/>
            <person name="Preston G.M."/>
            <person name="Zhang X.-X."/>
            <person name="Moon C.D."/>
            <person name="Gehrig S.M."/>
            <person name="Godfrey S.A.C."/>
            <person name="Knight C.G."/>
            <person name="Malone J.G."/>
            <person name="Robinson Z."/>
            <person name="Spiers A.J."/>
            <person name="Harris S."/>
            <person name="Challis G.L."/>
            <person name="Yaxley A.M."/>
            <person name="Harris D."/>
            <person name="Seeger K."/>
            <person name="Murphy L."/>
            <person name="Rutter S."/>
            <person name="Squares R."/>
            <person name="Quail M.A."/>
            <person name="Saunders E."/>
            <person name="Mavromatis K."/>
            <person name="Brettin T.S."/>
            <person name="Bentley S.D."/>
            <person name="Hothersall J."/>
            <person name="Stephens E."/>
            <person name="Thomas C.M."/>
            <person name="Parkhill J."/>
            <person name="Levy S.B."/>
            <person name="Rainey P.B."/>
            <person name="Thomson N.R."/>
        </authorList>
    </citation>
    <scope>NUCLEOTIDE SEQUENCE [LARGE SCALE GENOMIC DNA]</scope>
    <source>
        <strain>Pf0-1</strain>
    </source>
</reference>
<comment type="function">
    <text evidence="1">Key component of the proton channel; it plays a direct role in the translocation of protons across the membrane.</text>
</comment>
<comment type="subunit">
    <text evidence="1">F-type ATPases have 2 components, CF(1) - the catalytic core - and CF(0) - the membrane proton channel. CF(1) has five subunits: alpha(3), beta(3), gamma(1), delta(1), epsilon(1). CF(0) has three main subunits: a(1), b(2) and c(9-12). The alpha and beta chains form an alternating ring which encloses part of the gamma chain. CF(1) is attached to CF(0) by a central stalk formed by the gamma and epsilon chains, while a peripheral stalk is formed by the delta and b chains.</text>
</comment>
<comment type="subcellular location">
    <subcellularLocation>
        <location evidence="1">Cell inner membrane</location>
        <topology evidence="1">Multi-pass membrane protein</topology>
    </subcellularLocation>
</comment>
<comment type="similarity">
    <text evidence="1">Belongs to the ATPase A chain family.</text>
</comment>
<sequence length="289" mass="31704">MAETTASGYIQHHLQNLTFGQLPNGGWGFAHTAAEAKEMGFWAFHVDTLGWSVALGLIFVLLFRMAAKKATSGQPGALQNFVEVLVEFVDGSVKDSFHGRSPVIAPLALTIFVWVFLMNAVDLVPVDWVPQLAILISGDHHIPFRAVSTTDPNATLGMAFSVFALIIFYSIKVKGLGGFIGELTLHPFGSKNIFVQALLIPVNFLLEFVTLIAKPISLALRLFGNMYAGELVFILIAVMFGSGLLWLSGLGVVLQWAWAVFHILIITLQAFIFMMLTIVYLSMAHEENH</sequence>
<dbReference type="EMBL" id="CP000094">
    <property type="protein sequence ID" value="ABA77469.1"/>
    <property type="molecule type" value="Genomic_DNA"/>
</dbReference>
<dbReference type="RefSeq" id="WP_011336719.1">
    <property type="nucleotide sequence ID" value="NC_007492.2"/>
</dbReference>
<dbReference type="SMR" id="Q3K435"/>
<dbReference type="KEGG" id="pfo:Pfl01_5736"/>
<dbReference type="eggNOG" id="COG0356">
    <property type="taxonomic scope" value="Bacteria"/>
</dbReference>
<dbReference type="HOGENOM" id="CLU_041018_1_0_6"/>
<dbReference type="Proteomes" id="UP000002704">
    <property type="component" value="Chromosome"/>
</dbReference>
<dbReference type="GO" id="GO:0005886">
    <property type="term" value="C:plasma membrane"/>
    <property type="evidence" value="ECO:0007669"/>
    <property type="project" value="UniProtKB-SubCell"/>
</dbReference>
<dbReference type="GO" id="GO:0045259">
    <property type="term" value="C:proton-transporting ATP synthase complex"/>
    <property type="evidence" value="ECO:0007669"/>
    <property type="project" value="UniProtKB-KW"/>
</dbReference>
<dbReference type="GO" id="GO:0046933">
    <property type="term" value="F:proton-transporting ATP synthase activity, rotational mechanism"/>
    <property type="evidence" value="ECO:0007669"/>
    <property type="project" value="UniProtKB-UniRule"/>
</dbReference>
<dbReference type="GO" id="GO:0042777">
    <property type="term" value="P:proton motive force-driven plasma membrane ATP synthesis"/>
    <property type="evidence" value="ECO:0007669"/>
    <property type="project" value="TreeGrafter"/>
</dbReference>
<dbReference type="CDD" id="cd00310">
    <property type="entry name" value="ATP-synt_Fo_a_6"/>
    <property type="match status" value="1"/>
</dbReference>
<dbReference type="FunFam" id="1.20.120.220:FF:000002">
    <property type="entry name" value="ATP synthase subunit a"/>
    <property type="match status" value="1"/>
</dbReference>
<dbReference type="Gene3D" id="1.20.120.220">
    <property type="entry name" value="ATP synthase, F0 complex, subunit A"/>
    <property type="match status" value="1"/>
</dbReference>
<dbReference type="HAMAP" id="MF_01393">
    <property type="entry name" value="ATP_synth_a_bact"/>
    <property type="match status" value="1"/>
</dbReference>
<dbReference type="InterPro" id="IPR045082">
    <property type="entry name" value="ATP_syn_F0_a_bact/chloroplast"/>
</dbReference>
<dbReference type="InterPro" id="IPR000568">
    <property type="entry name" value="ATP_synth_F0_asu"/>
</dbReference>
<dbReference type="InterPro" id="IPR023011">
    <property type="entry name" value="ATP_synth_F0_asu_AS"/>
</dbReference>
<dbReference type="InterPro" id="IPR035908">
    <property type="entry name" value="F0_ATP_A_sf"/>
</dbReference>
<dbReference type="NCBIfam" id="TIGR01131">
    <property type="entry name" value="ATP_synt_6_or_A"/>
    <property type="match status" value="1"/>
</dbReference>
<dbReference type="NCBIfam" id="NF004477">
    <property type="entry name" value="PRK05815.1-1"/>
    <property type="match status" value="1"/>
</dbReference>
<dbReference type="PANTHER" id="PTHR42823">
    <property type="entry name" value="ATP SYNTHASE SUBUNIT A, CHLOROPLASTIC"/>
    <property type="match status" value="1"/>
</dbReference>
<dbReference type="PANTHER" id="PTHR42823:SF3">
    <property type="entry name" value="ATP SYNTHASE SUBUNIT A, CHLOROPLASTIC"/>
    <property type="match status" value="1"/>
</dbReference>
<dbReference type="Pfam" id="PF00119">
    <property type="entry name" value="ATP-synt_A"/>
    <property type="match status" value="1"/>
</dbReference>
<dbReference type="SUPFAM" id="SSF81336">
    <property type="entry name" value="F1F0 ATP synthase subunit A"/>
    <property type="match status" value="1"/>
</dbReference>
<dbReference type="PROSITE" id="PS00449">
    <property type="entry name" value="ATPASE_A"/>
    <property type="match status" value="1"/>
</dbReference>
<organism>
    <name type="scientific">Pseudomonas fluorescens (strain Pf0-1)</name>
    <dbReference type="NCBI Taxonomy" id="205922"/>
    <lineage>
        <taxon>Bacteria</taxon>
        <taxon>Pseudomonadati</taxon>
        <taxon>Pseudomonadota</taxon>
        <taxon>Gammaproteobacteria</taxon>
        <taxon>Pseudomonadales</taxon>
        <taxon>Pseudomonadaceae</taxon>
        <taxon>Pseudomonas</taxon>
    </lineage>
</organism>
<protein>
    <recommendedName>
        <fullName evidence="1">ATP synthase subunit a</fullName>
    </recommendedName>
    <alternativeName>
        <fullName evidence="1">ATP synthase F0 sector subunit a</fullName>
    </alternativeName>
    <alternativeName>
        <fullName evidence="1">F-ATPase subunit 6</fullName>
    </alternativeName>
</protein>
<gene>
    <name evidence="1" type="primary">atpB</name>
    <name type="ordered locus">Pfl01_5736</name>
</gene>